<sequence>MSAYTHPMERELSGLSSRGNSELGSRYSIESGCYMTSLAASIFIASLVTFGVLMITLLIALSTMLQSCENRNIAIVEAQRLDESFGYCKILSLHSQLNSLDEESELPLLCRDVALHRIKQGIYLRELNFTIQMALTYFQTIKPMNDNCDVVVIDIDDTNLLEQDSYYMKYIEEAKHQKSILILALYSKLRSQGYSMVLLSRRPETERNATIEQLKSRGYSDWSHLIMSREDTRQKEELERGHRVIGVIGNHMDVLRGQWNWQSKRLFKLPSLTYDDVLDYNER</sequence>
<accession>O04195</accession>
<reference key="1">
    <citation type="journal article" date="1999" name="Nature">
        <title>Sequence and analysis of chromosome 2 of the plant Arabidopsis thaliana.</title>
        <authorList>
            <person name="Lin X."/>
            <person name="Kaul S."/>
            <person name="Rounsley S.D."/>
            <person name="Shea T.P."/>
            <person name="Benito M.-I."/>
            <person name="Town C.D."/>
            <person name="Fujii C.Y."/>
            <person name="Mason T.M."/>
            <person name="Bowman C.L."/>
            <person name="Barnstead M.E."/>
            <person name="Feldblyum T.V."/>
            <person name="Buell C.R."/>
            <person name="Ketchum K.A."/>
            <person name="Lee J.J."/>
            <person name="Ronning C.M."/>
            <person name="Koo H.L."/>
            <person name="Moffat K.S."/>
            <person name="Cronin L.A."/>
            <person name="Shen M."/>
            <person name="Pai G."/>
            <person name="Van Aken S."/>
            <person name="Umayam L."/>
            <person name="Tallon L.J."/>
            <person name="Gill J.E."/>
            <person name="Adams M.D."/>
            <person name="Carrera A.J."/>
            <person name="Creasy T.H."/>
            <person name="Goodman H.M."/>
            <person name="Somerville C.R."/>
            <person name="Copenhaver G.P."/>
            <person name="Preuss D."/>
            <person name="Nierman W.C."/>
            <person name="White O."/>
            <person name="Eisen J.A."/>
            <person name="Salzberg S.L."/>
            <person name="Fraser C.M."/>
            <person name="Venter J.C."/>
        </authorList>
    </citation>
    <scope>NUCLEOTIDE SEQUENCE [LARGE SCALE GENOMIC DNA]</scope>
    <source>
        <strain>cv. Columbia</strain>
    </source>
</reference>
<reference key="2">
    <citation type="journal article" date="2017" name="Plant J.">
        <title>Araport11: a complete reannotation of the Arabidopsis thaliana reference genome.</title>
        <authorList>
            <person name="Cheng C.Y."/>
            <person name="Krishnakumar V."/>
            <person name="Chan A.P."/>
            <person name="Thibaud-Nissen F."/>
            <person name="Schobel S."/>
            <person name="Town C.D."/>
        </authorList>
    </citation>
    <scope>GENOME REANNOTATION</scope>
    <source>
        <strain>cv. Columbia</strain>
    </source>
</reference>
<reference key="3">
    <citation type="submission" date="2002-03" db="EMBL/GenBank/DDBJ databases">
        <title>Full-length cDNA from Arabidopsis thaliana.</title>
        <authorList>
            <person name="Brover V.V."/>
            <person name="Troukhan M.E."/>
            <person name="Alexandrov N.A."/>
            <person name="Lu Y.-P."/>
            <person name="Flavell R.B."/>
            <person name="Feldmann K.A."/>
        </authorList>
    </citation>
    <scope>NUCLEOTIDE SEQUENCE [LARGE SCALE MRNA]</scope>
</reference>
<reference key="4">
    <citation type="submission" date="2006-04" db="EMBL/GenBank/DDBJ databases">
        <title>Arabidopsis ORF clones.</title>
        <authorList>
            <person name="Shinn P."/>
            <person name="Chen H."/>
            <person name="Kim C.J."/>
            <person name="Ecker J.R."/>
        </authorList>
    </citation>
    <scope>NUCLEOTIDE SEQUENCE [LARGE SCALE MRNA]</scope>
    <source>
        <strain>cv. Columbia</strain>
    </source>
</reference>
<proteinExistence type="evidence at transcript level"/>
<evidence type="ECO:0000255" key="1"/>
<evidence type="ECO:0000256" key="2">
    <source>
        <dbReference type="SAM" id="MobiDB-lite"/>
    </source>
</evidence>
<evidence type="ECO:0000305" key="3"/>
<name>Y2992_ARATH</name>
<dbReference type="EMBL" id="AF002109">
    <property type="protein sequence ID" value="AAB95277.2"/>
    <property type="molecule type" value="Genomic_DNA"/>
</dbReference>
<dbReference type="EMBL" id="CP002685">
    <property type="protein sequence ID" value="AEC09749.1"/>
    <property type="molecule type" value="Genomic_DNA"/>
</dbReference>
<dbReference type="EMBL" id="CP002685">
    <property type="protein sequence ID" value="AEC09751.1"/>
    <property type="molecule type" value="Genomic_DNA"/>
</dbReference>
<dbReference type="EMBL" id="CP002685">
    <property type="protein sequence ID" value="ANM61390.1"/>
    <property type="molecule type" value="Genomic_DNA"/>
</dbReference>
<dbReference type="EMBL" id="AY087290">
    <property type="protein sequence ID" value="AAM64843.1"/>
    <property type="molecule type" value="mRNA"/>
</dbReference>
<dbReference type="EMBL" id="BT025037">
    <property type="protein sequence ID" value="ABE02412.1"/>
    <property type="molecule type" value="mRNA"/>
</dbReference>
<dbReference type="PIR" id="A84823">
    <property type="entry name" value="A84823"/>
</dbReference>
<dbReference type="RefSeq" id="NP_001189717.1">
    <molecule id="O04195-1"/>
    <property type="nucleotide sequence ID" value="NM_001202788.1"/>
</dbReference>
<dbReference type="RefSeq" id="NP_001323609.1">
    <molecule id="O04195-1"/>
    <property type="nucleotide sequence ID" value="NM_001336806.1"/>
</dbReference>
<dbReference type="RefSeq" id="NP_565918.1">
    <molecule id="O04195-1"/>
    <property type="nucleotide sequence ID" value="NM_129550.4"/>
</dbReference>
<dbReference type="SMR" id="O04195"/>
<dbReference type="FunCoup" id="O04195">
    <property type="interactions" value="19"/>
</dbReference>
<dbReference type="iPTMnet" id="O04195"/>
<dbReference type="PaxDb" id="3702-AT2G39920.1"/>
<dbReference type="ProteomicsDB" id="234651">
    <molecule id="O04195-1"/>
</dbReference>
<dbReference type="EnsemblPlants" id="AT2G39920.1">
    <molecule id="O04195-1"/>
    <property type="protein sequence ID" value="AT2G39920.1"/>
    <property type="gene ID" value="AT2G39920"/>
</dbReference>
<dbReference type="EnsemblPlants" id="AT2G39920.3">
    <molecule id="O04195-1"/>
    <property type="protein sequence ID" value="AT2G39920.3"/>
    <property type="gene ID" value="AT2G39920"/>
</dbReference>
<dbReference type="EnsemblPlants" id="AT2G39920.4">
    <molecule id="O04195-1"/>
    <property type="protein sequence ID" value="AT2G39920.4"/>
    <property type="gene ID" value="AT2G39920"/>
</dbReference>
<dbReference type="GeneID" id="818579"/>
<dbReference type="Gramene" id="AT2G39920.1">
    <molecule id="O04195-1"/>
    <property type="protein sequence ID" value="AT2G39920.1"/>
    <property type="gene ID" value="AT2G39920"/>
</dbReference>
<dbReference type="Gramene" id="AT2G39920.3">
    <molecule id="O04195-1"/>
    <property type="protein sequence ID" value="AT2G39920.3"/>
    <property type="gene ID" value="AT2G39920"/>
</dbReference>
<dbReference type="Gramene" id="AT2G39920.4">
    <molecule id="O04195-1"/>
    <property type="protein sequence ID" value="AT2G39920.4"/>
    <property type="gene ID" value="AT2G39920"/>
</dbReference>
<dbReference type="KEGG" id="ath:AT2G39920"/>
<dbReference type="Araport" id="AT2G39920"/>
<dbReference type="TAIR" id="AT2G39920"/>
<dbReference type="eggNOG" id="ENOG502QQUA">
    <property type="taxonomic scope" value="Eukaryota"/>
</dbReference>
<dbReference type="HOGENOM" id="CLU_053338_2_0_1"/>
<dbReference type="InParanoid" id="O04195"/>
<dbReference type="OrthoDB" id="1900337at2759"/>
<dbReference type="PhylomeDB" id="O04195"/>
<dbReference type="PRO" id="PR:O04195"/>
<dbReference type="Proteomes" id="UP000006548">
    <property type="component" value="Chromosome 2"/>
</dbReference>
<dbReference type="ExpressionAtlas" id="O04195">
    <property type="expression patterns" value="baseline and differential"/>
</dbReference>
<dbReference type="GO" id="GO:0016020">
    <property type="term" value="C:membrane"/>
    <property type="evidence" value="ECO:0007669"/>
    <property type="project" value="UniProtKB-SubCell"/>
</dbReference>
<dbReference type="FunFam" id="3.40.50.1000:FF:000415">
    <property type="entry name" value="HAD superfamily, subfamily IIIB acid phosphatase"/>
    <property type="match status" value="1"/>
</dbReference>
<dbReference type="Gene3D" id="3.40.50.1000">
    <property type="entry name" value="HAD superfamily/HAD-like"/>
    <property type="match status" value="1"/>
</dbReference>
<dbReference type="InterPro" id="IPR005519">
    <property type="entry name" value="Acid_phosphat_B-like"/>
</dbReference>
<dbReference type="InterPro" id="IPR023214">
    <property type="entry name" value="HAD_sf"/>
</dbReference>
<dbReference type="PANTHER" id="PTHR31284:SF22">
    <property type="entry name" value="ACID PHOSPHATASE"/>
    <property type="match status" value="1"/>
</dbReference>
<dbReference type="PANTHER" id="PTHR31284">
    <property type="entry name" value="ACID PHOSPHATASE-LIKE PROTEIN"/>
    <property type="match status" value="1"/>
</dbReference>
<dbReference type="Pfam" id="PF03767">
    <property type="entry name" value="Acid_phosphat_B"/>
    <property type="match status" value="1"/>
</dbReference>
<comment type="subcellular location">
    <subcellularLocation>
        <location evidence="3">Membrane</location>
        <topology evidence="3">Single-pass membrane protein</topology>
    </subcellularLocation>
</comment>
<comment type="alternative products">
    <event type="alternative splicing"/>
    <isoform>
        <id>O04195-1</id>
        <name>1</name>
        <sequence type="displayed"/>
    </isoform>
    <text>A number of isoforms are produced. According to EST sequences.</text>
</comment>
<comment type="similarity">
    <text evidence="3">Belongs to the APS1/VSP family.</text>
</comment>
<organism>
    <name type="scientific">Arabidopsis thaliana</name>
    <name type="common">Mouse-ear cress</name>
    <dbReference type="NCBI Taxonomy" id="3702"/>
    <lineage>
        <taxon>Eukaryota</taxon>
        <taxon>Viridiplantae</taxon>
        <taxon>Streptophyta</taxon>
        <taxon>Embryophyta</taxon>
        <taxon>Tracheophyta</taxon>
        <taxon>Spermatophyta</taxon>
        <taxon>Magnoliopsida</taxon>
        <taxon>eudicotyledons</taxon>
        <taxon>Gunneridae</taxon>
        <taxon>Pentapetalae</taxon>
        <taxon>rosids</taxon>
        <taxon>malvids</taxon>
        <taxon>Brassicales</taxon>
        <taxon>Brassicaceae</taxon>
        <taxon>Camelineae</taxon>
        <taxon>Arabidopsis</taxon>
    </lineage>
</organism>
<protein>
    <recommendedName>
        <fullName>Uncharacterized protein At2g39920</fullName>
    </recommendedName>
</protein>
<keyword id="KW-0025">Alternative splicing</keyword>
<keyword id="KW-0472">Membrane</keyword>
<keyword id="KW-1185">Reference proteome</keyword>
<keyword id="KW-0812">Transmembrane</keyword>
<keyword id="KW-1133">Transmembrane helix</keyword>
<gene>
    <name type="ordered locus">At2g39920</name>
    <name type="ORF">T28M21.8</name>
</gene>
<feature type="chain" id="PRO_0000271286" description="Uncharacterized protein At2g39920">
    <location>
        <begin position="1"/>
        <end position="283"/>
    </location>
</feature>
<feature type="transmembrane region" description="Helical" evidence="1">
    <location>
        <begin position="41"/>
        <end position="61"/>
    </location>
</feature>
<feature type="region of interest" description="Disordered" evidence="2">
    <location>
        <begin position="1"/>
        <end position="21"/>
    </location>
</feature>